<reference key="1">
    <citation type="journal article" date="2007" name="PLoS Genet.">
        <title>Meningococcal genetic variation mechanisms viewed through comparative analysis of serogroup C strain FAM18.</title>
        <authorList>
            <person name="Bentley S.D."/>
            <person name="Vernikos G.S."/>
            <person name="Snyder L.A.S."/>
            <person name="Churcher C."/>
            <person name="Arrowsmith C."/>
            <person name="Chillingworth T."/>
            <person name="Cronin A."/>
            <person name="Davis P.H."/>
            <person name="Holroyd N.E."/>
            <person name="Jagels K."/>
            <person name="Maddison M."/>
            <person name="Moule S."/>
            <person name="Rabbinowitsch E."/>
            <person name="Sharp S."/>
            <person name="Unwin L."/>
            <person name="Whitehead S."/>
            <person name="Quail M.A."/>
            <person name="Achtman M."/>
            <person name="Barrell B.G."/>
            <person name="Saunders N.J."/>
            <person name="Parkhill J."/>
        </authorList>
    </citation>
    <scope>NUCLEOTIDE SEQUENCE [LARGE SCALE GENOMIC DNA]</scope>
    <source>
        <strain>ATCC 700532 / DSM 15464 / FAM18</strain>
    </source>
</reference>
<organism>
    <name type="scientific">Neisseria meningitidis serogroup C / serotype 2a (strain ATCC 700532 / DSM 15464 / FAM18)</name>
    <dbReference type="NCBI Taxonomy" id="272831"/>
    <lineage>
        <taxon>Bacteria</taxon>
        <taxon>Pseudomonadati</taxon>
        <taxon>Pseudomonadota</taxon>
        <taxon>Betaproteobacteria</taxon>
        <taxon>Neisseriales</taxon>
        <taxon>Neisseriaceae</taxon>
        <taxon>Neisseria</taxon>
    </lineage>
</organism>
<comment type="function">
    <text evidence="1">NAD-binding protein involved in the addition of a carboxymethylaminomethyl (cmnm) group at the wobble position (U34) of certain tRNAs, forming tRNA-cmnm(5)s(2)U34.</text>
</comment>
<comment type="cofactor">
    <cofactor evidence="1">
        <name>FAD</name>
        <dbReference type="ChEBI" id="CHEBI:57692"/>
    </cofactor>
</comment>
<comment type="subunit">
    <text evidence="1">Homodimer. Heterotetramer of two MnmE and two MnmG subunits.</text>
</comment>
<comment type="subcellular location">
    <subcellularLocation>
        <location evidence="1">Cytoplasm</location>
    </subcellularLocation>
</comment>
<comment type="similarity">
    <text evidence="1">Belongs to the MnmG family.</text>
</comment>
<comment type="sequence caution" evidence="2">
    <conflict type="erroneous initiation">
        <sequence resource="EMBL-CDS" id="CAM09503"/>
    </conflict>
</comment>
<evidence type="ECO:0000255" key="1">
    <source>
        <dbReference type="HAMAP-Rule" id="MF_00129"/>
    </source>
</evidence>
<evidence type="ECO:0000305" key="2"/>
<keyword id="KW-0963">Cytoplasm</keyword>
<keyword id="KW-0274">FAD</keyword>
<keyword id="KW-0285">Flavoprotein</keyword>
<keyword id="KW-0520">NAD</keyword>
<keyword id="KW-0819">tRNA processing</keyword>
<dbReference type="EMBL" id="AM421808">
    <property type="protein sequence ID" value="CAM09503.1"/>
    <property type="status" value="ALT_INIT"/>
    <property type="molecule type" value="Genomic_DNA"/>
</dbReference>
<dbReference type="SMR" id="A1KRM5"/>
<dbReference type="KEGG" id="nmc:NMC0184"/>
<dbReference type="HOGENOM" id="CLU_007831_2_2_4"/>
<dbReference type="Proteomes" id="UP000002286">
    <property type="component" value="Chromosome"/>
</dbReference>
<dbReference type="GO" id="GO:0005829">
    <property type="term" value="C:cytosol"/>
    <property type="evidence" value="ECO:0007669"/>
    <property type="project" value="TreeGrafter"/>
</dbReference>
<dbReference type="GO" id="GO:0050660">
    <property type="term" value="F:flavin adenine dinucleotide binding"/>
    <property type="evidence" value="ECO:0007669"/>
    <property type="project" value="UniProtKB-UniRule"/>
</dbReference>
<dbReference type="GO" id="GO:0030488">
    <property type="term" value="P:tRNA methylation"/>
    <property type="evidence" value="ECO:0007669"/>
    <property type="project" value="TreeGrafter"/>
</dbReference>
<dbReference type="GO" id="GO:0002098">
    <property type="term" value="P:tRNA wobble uridine modification"/>
    <property type="evidence" value="ECO:0007669"/>
    <property type="project" value="InterPro"/>
</dbReference>
<dbReference type="FunFam" id="1.10.10.1800:FF:000001">
    <property type="entry name" value="tRNA uridine 5-carboxymethylaminomethyl modification enzyme MnmG"/>
    <property type="match status" value="1"/>
</dbReference>
<dbReference type="FunFam" id="1.10.150.570:FF:000001">
    <property type="entry name" value="tRNA uridine 5-carboxymethylaminomethyl modification enzyme MnmG"/>
    <property type="match status" value="1"/>
</dbReference>
<dbReference type="FunFam" id="3.50.50.60:FF:000002">
    <property type="entry name" value="tRNA uridine 5-carboxymethylaminomethyl modification enzyme MnmG"/>
    <property type="match status" value="1"/>
</dbReference>
<dbReference type="FunFam" id="3.50.50.60:FF:000010">
    <property type="entry name" value="tRNA uridine 5-carboxymethylaminomethyl modification enzyme MnmG"/>
    <property type="match status" value="1"/>
</dbReference>
<dbReference type="Gene3D" id="3.50.50.60">
    <property type="entry name" value="FAD/NAD(P)-binding domain"/>
    <property type="match status" value="2"/>
</dbReference>
<dbReference type="Gene3D" id="1.10.150.570">
    <property type="entry name" value="GidA associated domain, C-terminal subdomain"/>
    <property type="match status" value="1"/>
</dbReference>
<dbReference type="Gene3D" id="1.10.10.1800">
    <property type="entry name" value="tRNA uridine 5-carboxymethylaminomethyl modification enzyme MnmG/GidA"/>
    <property type="match status" value="1"/>
</dbReference>
<dbReference type="HAMAP" id="MF_00129">
    <property type="entry name" value="MnmG_GidA"/>
    <property type="match status" value="1"/>
</dbReference>
<dbReference type="InterPro" id="IPR036188">
    <property type="entry name" value="FAD/NAD-bd_sf"/>
</dbReference>
<dbReference type="InterPro" id="IPR049312">
    <property type="entry name" value="GIDA_C_N"/>
</dbReference>
<dbReference type="InterPro" id="IPR004416">
    <property type="entry name" value="MnmG"/>
</dbReference>
<dbReference type="InterPro" id="IPR002218">
    <property type="entry name" value="MnmG-rel"/>
</dbReference>
<dbReference type="InterPro" id="IPR020595">
    <property type="entry name" value="MnmG-rel_CS"/>
</dbReference>
<dbReference type="InterPro" id="IPR026904">
    <property type="entry name" value="MnmG_C"/>
</dbReference>
<dbReference type="InterPro" id="IPR047001">
    <property type="entry name" value="MnmG_C_subdom"/>
</dbReference>
<dbReference type="InterPro" id="IPR044920">
    <property type="entry name" value="MnmG_C_subdom_sf"/>
</dbReference>
<dbReference type="InterPro" id="IPR040131">
    <property type="entry name" value="MnmG_N"/>
</dbReference>
<dbReference type="NCBIfam" id="TIGR00136">
    <property type="entry name" value="mnmG_gidA"/>
    <property type="match status" value="1"/>
</dbReference>
<dbReference type="PANTHER" id="PTHR11806">
    <property type="entry name" value="GLUCOSE INHIBITED DIVISION PROTEIN A"/>
    <property type="match status" value="1"/>
</dbReference>
<dbReference type="PANTHER" id="PTHR11806:SF0">
    <property type="entry name" value="PROTEIN MTO1 HOMOLOG, MITOCHONDRIAL"/>
    <property type="match status" value="1"/>
</dbReference>
<dbReference type="Pfam" id="PF01134">
    <property type="entry name" value="GIDA"/>
    <property type="match status" value="1"/>
</dbReference>
<dbReference type="Pfam" id="PF21680">
    <property type="entry name" value="GIDA_C_1st"/>
    <property type="match status" value="1"/>
</dbReference>
<dbReference type="Pfam" id="PF13932">
    <property type="entry name" value="SAM_GIDA_C"/>
    <property type="match status" value="1"/>
</dbReference>
<dbReference type="SMART" id="SM01228">
    <property type="entry name" value="GIDA_assoc_3"/>
    <property type="match status" value="1"/>
</dbReference>
<dbReference type="SUPFAM" id="SSF51905">
    <property type="entry name" value="FAD/NAD(P)-binding domain"/>
    <property type="match status" value="1"/>
</dbReference>
<dbReference type="PROSITE" id="PS01280">
    <property type="entry name" value="GIDA_1"/>
    <property type="match status" value="1"/>
</dbReference>
<dbReference type="PROSITE" id="PS01281">
    <property type="entry name" value="GIDA_2"/>
    <property type="match status" value="1"/>
</dbReference>
<gene>
    <name evidence="1" type="primary">mnmG</name>
    <name evidence="1" type="synonym">gidA</name>
    <name type="ordered locus">NMC0184</name>
</gene>
<protein>
    <recommendedName>
        <fullName evidence="1">tRNA uridine 5-carboxymethylaminomethyl modification enzyme MnmG</fullName>
    </recommendedName>
    <alternativeName>
        <fullName evidence="1">Glucose-inhibited division protein A</fullName>
    </alternativeName>
</protein>
<proteinExistence type="inferred from homology"/>
<name>MNMG_NEIMF</name>
<sequence>MIYPKTYDVIVVGGGHAGTEAALAAARMGAQTLLLTHNIETLGQMSCNPSIGGIGKGHLVRELDALGGAMALATDKSGIQFRRLNASKGAAVRATRAQADRILYKATIREMLENQENLDLFQQAVEDVTLDGERISGVVTAMGVEFKARAVVLTAGTFLSGKIHIGLENYEGGRAGDPAAKSLGGRLRELNLPQGRLKTGTPPRIDGRTIDFSQLTEQPGDTPVPVMSVRGSADMHPRQVSCWITHTNTQTHDIIRSGFDRSPMFTGKIEGVGPRYCPSIEDKINRFADKDSHQIFLEPEGLTTHEYYPNGISTSLPFDIQIALVRSMKGLENAHILRPGYAIEYDYFDPRNLKASLETKTIQGLFFAGQINGTTGYEEAAAQGLLAGANAVQYVREQDPLLLRREQAYLGVLVDDLITKGVNEPYRMFTSRAEYRLQLREDNADMRLTEDGYKIGLVGEAQWRMFNEKREAIEREIQRLKTTWYTPQKLAEDEQIRVFGQKLSREANLHDLLRRPNLDYAALMTLEGAMPSERLSAEVVEQVEIQVKYQGYIDRQNEEIDSRRDIETLKLPDGIDYGKVKGLSAEVQQKLNQHKPETVGQASRISGVTPAAVALLMVHLKRGFKDAK</sequence>
<feature type="chain" id="PRO_0000345306" description="tRNA uridine 5-carboxymethylaminomethyl modification enzyme MnmG">
    <location>
        <begin position="1"/>
        <end position="628"/>
    </location>
</feature>
<feature type="binding site" evidence="1">
    <location>
        <begin position="13"/>
        <end position="18"/>
    </location>
    <ligand>
        <name>FAD</name>
        <dbReference type="ChEBI" id="CHEBI:57692"/>
    </ligand>
</feature>
<feature type="binding site" evidence="1">
    <location>
        <begin position="273"/>
        <end position="287"/>
    </location>
    <ligand>
        <name>NAD(+)</name>
        <dbReference type="ChEBI" id="CHEBI:57540"/>
    </ligand>
</feature>
<accession>A1KRM5</accession>